<evidence type="ECO:0000255" key="1">
    <source>
        <dbReference type="HAMAP-Rule" id="MF_01038"/>
    </source>
</evidence>
<feature type="chain" id="PRO_0000396524" description="2,3-bisphosphoglycerate-independent phosphoglycerate mutase">
    <location>
        <begin position="1"/>
        <end position="510"/>
    </location>
</feature>
<feature type="active site" description="Phosphoserine intermediate" evidence="1">
    <location>
        <position position="62"/>
    </location>
</feature>
<feature type="binding site" evidence="1">
    <location>
        <position position="12"/>
    </location>
    <ligand>
        <name>Mn(2+)</name>
        <dbReference type="ChEBI" id="CHEBI:29035"/>
        <label>2</label>
    </ligand>
</feature>
<feature type="binding site" evidence="1">
    <location>
        <position position="62"/>
    </location>
    <ligand>
        <name>Mn(2+)</name>
        <dbReference type="ChEBI" id="CHEBI:29035"/>
        <label>2</label>
    </ligand>
</feature>
<feature type="binding site" evidence="1">
    <location>
        <position position="123"/>
    </location>
    <ligand>
        <name>substrate</name>
    </ligand>
</feature>
<feature type="binding site" evidence="1">
    <location>
        <begin position="153"/>
        <end position="154"/>
    </location>
    <ligand>
        <name>substrate</name>
    </ligand>
</feature>
<feature type="binding site" evidence="1">
    <location>
        <position position="185"/>
    </location>
    <ligand>
        <name>substrate</name>
    </ligand>
</feature>
<feature type="binding site" evidence="1">
    <location>
        <position position="191"/>
    </location>
    <ligand>
        <name>substrate</name>
    </ligand>
</feature>
<feature type="binding site" evidence="1">
    <location>
        <begin position="261"/>
        <end position="264"/>
    </location>
    <ligand>
        <name>substrate</name>
    </ligand>
</feature>
<feature type="binding site" evidence="1">
    <location>
        <position position="336"/>
    </location>
    <ligand>
        <name>substrate</name>
    </ligand>
</feature>
<feature type="binding site" evidence="1">
    <location>
        <position position="403"/>
    </location>
    <ligand>
        <name>Mn(2+)</name>
        <dbReference type="ChEBI" id="CHEBI:29035"/>
        <label>1</label>
    </ligand>
</feature>
<feature type="binding site" evidence="1">
    <location>
        <position position="407"/>
    </location>
    <ligand>
        <name>Mn(2+)</name>
        <dbReference type="ChEBI" id="CHEBI:29035"/>
        <label>1</label>
    </ligand>
</feature>
<feature type="binding site" evidence="1">
    <location>
        <position position="444"/>
    </location>
    <ligand>
        <name>Mn(2+)</name>
        <dbReference type="ChEBI" id="CHEBI:29035"/>
        <label>2</label>
    </ligand>
</feature>
<feature type="binding site" evidence="1">
    <location>
        <position position="445"/>
    </location>
    <ligand>
        <name>Mn(2+)</name>
        <dbReference type="ChEBI" id="CHEBI:29035"/>
        <label>2</label>
    </ligand>
</feature>
<feature type="binding site" evidence="1">
    <location>
        <position position="462"/>
    </location>
    <ligand>
        <name>Mn(2+)</name>
        <dbReference type="ChEBI" id="CHEBI:29035"/>
        <label>1</label>
    </ligand>
</feature>
<sequence>MSKKPVALIILDGFALRDEDKGNAVTHAKKPNFDRFWNEYPHATLQASGEAVGLPEGQMGNSEVGHLNIGAGRIVYQSLTRVNVAIREGEFEQNETLLAAVKHAKEKGTNLHLFGLLSDGGVHSHIEHLYALLRLAKSEGLEKVYIHGFLDGRDVAPQSAETYLKELNEKIEEYGVGEIATLSGRYYSMDRDKRWERVEKSYRAMVYGEGPSYTSAEECVKDSYENGIYDEFVLPSVITKEDGSPVATIQDEDAVIFYNFRPDRAIQISNTFANEDFRSFDRGEKHPKNLHFVCLTHFSETVDGYVAFKPNNLDNTLGEVLSQNNLKQLRIAETEKYPHVTFFMSGGREAEFPGETRILIDSPKVATYDLKPEMSAYEVTDALLAEIEGDKQDAILLNFANPDMVGHSGMLEPTVKAIETVDECLGKIVDAILAKGGTAIITADHGNADEVITLEGNPMTAHTTNPVPVIVTKQGLELREDGILGDLAPTMLTLLDVAQPKEMTGKTLIK</sequence>
<proteinExistence type="inferred from homology"/>
<dbReference type="EC" id="5.4.2.12" evidence="1"/>
<dbReference type="EMBL" id="CP001982">
    <property type="protein sequence ID" value="ADF41835.1"/>
    <property type="molecule type" value="Genomic_DNA"/>
</dbReference>
<dbReference type="EMBL" id="M87647">
    <property type="protein sequence ID" value="AAA73205.1"/>
    <property type="molecule type" value="Genomic_DNA"/>
</dbReference>
<dbReference type="EMBL" id="M87648">
    <property type="protein sequence ID" value="AAA73208.1"/>
    <property type="molecule type" value="Genomic_DNA"/>
</dbReference>
<dbReference type="PIR" id="PQ0538">
    <property type="entry name" value="PQ0538"/>
</dbReference>
<dbReference type="RefSeq" id="WP_013085384.1">
    <property type="nucleotide sequence ID" value="NZ_CP120609.1"/>
</dbReference>
<dbReference type="SMR" id="D5DNA8"/>
<dbReference type="KEGG" id="bmd:BMD_5035"/>
<dbReference type="HOGENOM" id="CLU_026099_2_0_9"/>
<dbReference type="UniPathway" id="UPA00109">
    <property type="reaction ID" value="UER00186"/>
</dbReference>
<dbReference type="Proteomes" id="UP000002365">
    <property type="component" value="Chromosome"/>
</dbReference>
<dbReference type="GO" id="GO:0005829">
    <property type="term" value="C:cytosol"/>
    <property type="evidence" value="ECO:0007669"/>
    <property type="project" value="TreeGrafter"/>
</dbReference>
<dbReference type="GO" id="GO:0030145">
    <property type="term" value="F:manganese ion binding"/>
    <property type="evidence" value="ECO:0007669"/>
    <property type="project" value="UniProtKB-UniRule"/>
</dbReference>
<dbReference type="GO" id="GO:0004619">
    <property type="term" value="F:phosphoglycerate mutase activity"/>
    <property type="evidence" value="ECO:0007669"/>
    <property type="project" value="UniProtKB-EC"/>
</dbReference>
<dbReference type="GO" id="GO:0006007">
    <property type="term" value="P:glucose catabolic process"/>
    <property type="evidence" value="ECO:0007669"/>
    <property type="project" value="InterPro"/>
</dbReference>
<dbReference type="GO" id="GO:0006096">
    <property type="term" value="P:glycolytic process"/>
    <property type="evidence" value="ECO:0007669"/>
    <property type="project" value="UniProtKB-UniRule"/>
</dbReference>
<dbReference type="GO" id="GO:0030435">
    <property type="term" value="P:sporulation resulting in formation of a cellular spore"/>
    <property type="evidence" value="ECO:0007669"/>
    <property type="project" value="UniProtKB-KW"/>
</dbReference>
<dbReference type="CDD" id="cd16010">
    <property type="entry name" value="iPGM"/>
    <property type="match status" value="1"/>
</dbReference>
<dbReference type="FunFam" id="3.40.1450.10:FF:000001">
    <property type="entry name" value="2,3-bisphosphoglycerate-independent phosphoglycerate mutase"/>
    <property type="match status" value="1"/>
</dbReference>
<dbReference type="FunFam" id="3.40.720.10:FF:000001">
    <property type="entry name" value="2,3-bisphosphoglycerate-independent phosphoglycerate mutase"/>
    <property type="match status" value="1"/>
</dbReference>
<dbReference type="Gene3D" id="3.40.720.10">
    <property type="entry name" value="Alkaline Phosphatase, subunit A"/>
    <property type="match status" value="1"/>
</dbReference>
<dbReference type="Gene3D" id="3.40.1450.10">
    <property type="entry name" value="BPG-independent phosphoglycerate mutase, domain B"/>
    <property type="match status" value="1"/>
</dbReference>
<dbReference type="HAMAP" id="MF_01038">
    <property type="entry name" value="GpmI"/>
    <property type="match status" value="1"/>
</dbReference>
<dbReference type="InterPro" id="IPR017850">
    <property type="entry name" value="Alkaline_phosphatase_core_sf"/>
</dbReference>
<dbReference type="InterPro" id="IPR011258">
    <property type="entry name" value="BPG-indep_PGM_N"/>
</dbReference>
<dbReference type="InterPro" id="IPR006124">
    <property type="entry name" value="Metalloenzyme"/>
</dbReference>
<dbReference type="InterPro" id="IPR036646">
    <property type="entry name" value="PGAM_B_sf"/>
</dbReference>
<dbReference type="InterPro" id="IPR005995">
    <property type="entry name" value="Pgm_bpd_ind"/>
</dbReference>
<dbReference type="NCBIfam" id="TIGR01307">
    <property type="entry name" value="pgm_bpd_ind"/>
    <property type="match status" value="1"/>
</dbReference>
<dbReference type="PANTHER" id="PTHR31637">
    <property type="entry name" value="2,3-BISPHOSPHOGLYCERATE-INDEPENDENT PHOSPHOGLYCERATE MUTASE"/>
    <property type="match status" value="1"/>
</dbReference>
<dbReference type="PANTHER" id="PTHR31637:SF0">
    <property type="entry name" value="2,3-BISPHOSPHOGLYCERATE-INDEPENDENT PHOSPHOGLYCERATE MUTASE"/>
    <property type="match status" value="1"/>
</dbReference>
<dbReference type="Pfam" id="PF06415">
    <property type="entry name" value="iPGM_N"/>
    <property type="match status" value="1"/>
</dbReference>
<dbReference type="Pfam" id="PF01676">
    <property type="entry name" value="Metalloenzyme"/>
    <property type="match status" value="1"/>
</dbReference>
<dbReference type="PIRSF" id="PIRSF001492">
    <property type="entry name" value="IPGAM"/>
    <property type="match status" value="1"/>
</dbReference>
<dbReference type="SUPFAM" id="SSF64158">
    <property type="entry name" value="2,3-Bisphosphoglycerate-independent phosphoglycerate mutase, substrate-binding domain"/>
    <property type="match status" value="1"/>
</dbReference>
<dbReference type="SUPFAM" id="SSF53649">
    <property type="entry name" value="Alkaline phosphatase-like"/>
    <property type="match status" value="1"/>
</dbReference>
<gene>
    <name evidence="1" type="primary">gpmI</name>
    <name type="synonym">pgm</name>
    <name type="ordered locus">BMD_5035</name>
</gene>
<protein>
    <recommendedName>
        <fullName evidence="1">2,3-bisphosphoglycerate-independent phosphoglycerate mutase</fullName>
        <shortName evidence="1">BPG-independent PGAM</shortName>
        <shortName evidence="1">Phosphoglyceromutase</shortName>
        <shortName evidence="1">iPGM</shortName>
        <ecNumber evidence="1">5.4.2.12</ecNumber>
    </recommendedName>
</protein>
<name>GPMI_PRIM3</name>
<comment type="function">
    <text evidence="1">Essential for rapid growth and for sporulation. Catalyzes the interconversion of 2-phosphoglycerate and 3-phosphoglycerate.</text>
</comment>
<comment type="catalytic activity">
    <reaction evidence="1">
        <text>(2R)-2-phosphoglycerate = (2R)-3-phosphoglycerate</text>
        <dbReference type="Rhea" id="RHEA:15901"/>
        <dbReference type="ChEBI" id="CHEBI:58272"/>
        <dbReference type="ChEBI" id="CHEBI:58289"/>
        <dbReference type="EC" id="5.4.2.12"/>
    </reaction>
</comment>
<comment type="cofactor">
    <cofactor evidence="1">
        <name>Mn(2+)</name>
        <dbReference type="ChEBI" id="CHEBI:29035"/>
    </cofactor>
    <text evidence="1">Binds 2 manganese ions per subunit.</text>
</comment>
<comment type="pathway">
    <text evidence="1">Carbohydrate degradation; glycolysis; pyruvate from D-glyceraldehyde 3-phosphate: step 3/5.</text>
</comment>
<comment type="subunit">
    <text evidence="1">Monomer.</text>
</comment>
<comment type="similarity">
    <text evidence="1">Belongs to the BPG-independent phosphoglycerate mutase family.</text>
</comment>
<keyword id="KW-0324">Glycolysis</keyword>
<keyword id="KW-0413">Isomerase</keyword>
<keyword id="KW-0464">Manganese</keyword>
<keyword id="KW-0479">Metal-binding</keyword>
<keyword id="KW-0597">Phosphoprotein</keyword>
<keyword id="KW-0749">Sporulation</keyword>
<accession>D5DNA8</accession>
<accession>P35167</accession>
<accession>Q9S6F5</accession>
<reference key="1">
    <citation type="journal article" date="2011" name="J. Bacteriol.">
        <title>Genome sequences of the biotechnologically important Bacillus megaterium strains QM B1551 and DSM319.</title>
        <authorList>
            <person name="Eppinger M."/>
            <person name="Bunk B."/>
            <person name="Johns M.A."/>
            <person name="Edirisinghe J.N."/>
            <person name="Kutumbaka K.K."/>
            <person name="Koenig S.S."/>
            <person name="Creasy H.H."/>
            <person name="Rosovitz M.J."/>
            <person name="Riley D.R."/>
            <person name="Daugherty S."/>
            <person name="Martin M."/>
            <person name="Elbourne L.D."/>
            <person name="Paulsen I."/>
            <person name="Biedendieck R."/>
            <person name="Braun C."/>
            <person name="Grayburn S."/>
            <person name="Dhingra S."/>
            <person name="Lukyanchuk V."/>
            <person name="Ball B."/>
            <person name="Ul-Qamar R."/>
            <person name="Seibel J."/>
            <person name="Bremer E."/>
            <person name="Jahn D."/>
            <person name="Ravel J."/>
            <person name="Vary P.S."/>
        </authorList>
    </citation>
    <scope>NUCLEOTIDE SEQUENCE [LARGE SCALE GENOMIC DNA]</scope>
    <source>
        <strain>DSM 319 / IMG 1521</strain>
    </source>
</reference>
<reference key="2">
    <citation type="journal article" date="1992" name="Gene">
        <title>Cloning and sequencing of the genes encoding glyceraldehyde-3-phosphate dehydrogenase, phosphoglycerate kinase and triosephosphate isomerase (gap operon) from mesophilic Bacillus megaterium: comparison with corresponding sequences from thermophilic Bacillus stearothermophilus.</title>
        <authorList>
            <person name="Schlaepfer B.S."/>
            <person name="Zuber H."/>
        </authorList>
    </citation>
    <scope>NUCLEOTIDE SEQUENCE [GENOMIC DNA] OF 1-232</scope>
</reference>
<organism>
    <name type="scientific">Priestia megaterium (strain DSM 319 / IMG 1521)</name>
    <name type="common">Bacillus megaterium</name>
    <dbReference type="NCBI Taxonomy" id="592022"/>
    <lineage>
        <taxon>Bacteria</taxon>
        <taxon>Bacillati</taxon>
        <taxon>Bacillota</taxon>
        <taxon>Bacilli</taxon>
        <taxon>Bacillales</taxon>
        <taxon>Bacillaceae</taxon>
        <taxon>Priestia</taxon>
    </lineage>
</organism>